<gene>
    <name evidence="6" type="primary">C4orf54</name>
    <name evidence="4" type="synonym">FOPV</name>
</gene>
<evidence type="ECO:0000250" key="1">
    <source>
        <dbReference type="UniProtKB" id="E0CYV9"/>
    </source>
</evidence>
<evidence type="ECO:0000256" key="2">
    <source>
        <dbReference type="SAM" id="MobiDB-lite"/>
    </source>
</evidence>
<evidence type="ECO:0000269" key="3">
    <source>
    </source>
</evidence>
<evidence type="ECO:0000303" key="4">
    <source>
    </source>
</evidence>
<evidence type="ECO:0000305" key="5"/>
<evidence type="ECO:0000312" key="6">
    <source>
        <dbReference type="HGNC" id="HGNC:27741"/>
    </source>
</evidence>
<proteinExistence type="evidence at protein level"/>
<comment type="tissue specificity">
    <text evidence="3">Expressed in muscle, heart, kidney and liver but barely detectable in lung, pancreas and brain. In liver veins, expressed in hepatic vein, extrahepatic portal vein and intrahepatic portal vein.</text>
</comment>
<comment type="disease">
    <text evidence="3">Defects in C4orf54 may cause obliterative portal venopathy (OVP), a defect characterized by lesions of the intrahepatic branches of the portal vein that may lead to the occlusion or the obliteration of the small branches of the portal vein. Obliterative portal venopathy is currently thought to be responsible for many cases of portal hypertension in the absence of cirrhosis or obstruction of large portal or hepatic veins. Authors suggest a pathogenic role of FOPV mutations in some familial cases of OPV, with a pattern of autosomal dominant inheritance with incomplete penetrance and variable expressivity. Also, FOPV mutations may be involved in some non-familial cases (PubMed:28792652).</text>
</comment>
<keyword id="KW-0488">Methylation</keyword>
<keyword id="KW-0597">Phosphoprotein</keyword>
<keyword id="KW-1267">Proteomics identification</keyword>
<keyword id="KW-1185">Reference proteome</keyword>
<accession>D6RIA3</accession>
<protein>
    <recommendedName>
        <fullName evidence="5">Uncharacterized protein C4orf54</fullName>
    </recommendedName>
    <alternativeName>
        <fullName evidence="4">Familial obliterative portal venopathy</fullName>
    </alternativeName>
</protein>
<reference key="1">
    <citation type="journal article" date="2005" name="Nature">
        <title>Generation and annotation of the DNA sequences of human chromosomes 2 and 4.</title>
        <authorList>
            <person name="Hillier L.W."/>
            <person name="Graves T.A."/>
            <person name="Fulton R.S."/>
            <person name="Fulton L.A."/>
            <person name="Pepin K.H."/>
            <person name="Minx P."/>
            <person name="Wagner-McPherson C."/>
            <person name="Layman D."/>
            <person name="Wylie K."/>
            <person name="Sekhon M."/>
            <person name="Becker M.C."/>
            <person name="Fewell G.A."/>
            <person name="Delehaunty K.D."/>
            <person name="Miner T.L."/>
            <person name="Nash W.E."/>
            <person name="Kremitzki C."/>
            <person name="Oddy L."/>
            <person name="Du H."/>
            <person name="Sun H."/>
            <person name="Bradshaw-Cordum H."/>
            <person name="Ali J."/>
            <person name="Carter J."/>
            <person name="Cordes M."/>
            <person name="Harris A."/>
            <person name="Isak A."/>
            <person name="van Brunt A."/>
            <person name="Nguyen C."/>
            <person name="Du F."/>
            <person name="Courtney L."/>
            <person name="Kalicki J."/>
            <person name="Ozersky P."/>
            <person name="Abbott S."/>
            <person name="Armstrong J."/>
            <person name="Belter E.A."/>
            <person name="Caruso L."/>
            <person name="Cedroni M."/>
            <person name="Cotton M."/>
            <person name="Davidson T."/>
            <person name="Desai A."/>
            <person name="Elliott G."/>
            <person name="Erb T."/>
            <person name="Fronick C."/>
            <person name="Gaige T."/>
            <person name="Haakenson W."/>
            <person name="Haglund K."/>
            <person name="Holmes A."/>
            <person name="Harkins R."/>
            <person name="Kim K."/>
            <person name="Kruchowski S.S."/>
            <person name="Strong C.M."/>
            <person name="Grewal N."/>
            <person name="Goyea E."/>
            <person name="Hou S."/>
            <person name="Levy A."/>
            <person name="Martinka S."/>
            <person name="Mead K."/>
            <person name="McLellan M.D."/>
            <person name="Meyer R."/>
            <person name="Randall-Maher J."/>
            <person name="Tomlinson C."/>
            <person name="Dauphin-Kohlberg S."/>
            <person name="Kozlowicz-Reilly A."/>
            <person name="Shah N."/>
            <person name="Swearengen-Shahid S."/>
            <person name="Snider J."/>
            <person name="Strong J.T."/>
            <person name="Thompson J."/>
            <person name="Yoakum M."/>
            <person name="Leonard S."/>
            <person name="Pearman C."/>
            <person name="Trani L."/>
            <person name="Radionenko M."/>
            <person name="Waligorski J.E."/>
            <person name="Wang C."/>
            <person name="Rock S.M."/>
            <person name="Tin-Wollam A.-M."/>
            <person name="Maupin R."/>
            <person name="Latreille P."/>
            <person name="Wendl M.C."/>
            <person name="Yang S.-P."/>
            <person name="Pohl C."/>
            <person name="Wallis J.W."/>
            <person name="Spieth J."/>
            <person name="Bieri T.A."/>
            <person name="Berkowicz N."/>
            <person name="Nelson J.O."/>
            <person name="Osborne J."/>
            <person name="Ding L."/>
            <person name="Meyer R."/>
            <person name="Sabo A."/>
            <person name="Shotland Y."/>
            <person name="Sinha P."/>
            <person name="Wohldmann P.E."/>
            <person name="Cook L.L."/>
            <person name="Hickenbotham M.T."/>
            <person name="Eldred J."/>
            <person name="Williams D."/>
            <person name="Jones T.A."/>
            <person name="She X."/>
            <person name="Ciccarelli F.D."/>
            <person name="Izaurralde E."/>
            <person name="Taylor J."/>
            <person name="Schmutz J."/>
            <person name="Myers R.M."/>
            <person name="Cox D.R."/>
            <person name="Huang X."/>
            <person name="McPherson J.D."/>
            <person name="Mardis E.R."/>
            <person name="Clifton S.W."/>
            <person name="Warren W.C."/>
            <person name="Chinwalla A.T."/>
            <person name="Eddy S.R."/>
            <person name="Marra M.A."/>
            <person name="Ovcharenko I."/>
            <person name="Furey T.S."/>
            <person name="Miller W."/>
            <person name="Eichler E.E."/>
            <person name="Bork P."/>
            <person name="Suyama M."/>
            <person name="Torrents D."/>
            <person name="Waterston R.H."/>
            <person name="Wilson R.K."/>
        </authorList>
    </citation>
    <scope>NUCLEOTIDE SEQUENCE [LARGE SCALE GENOMIC DNA]</scope>
</reference>
<reference key="2">
    <citation type="journal article" date="2018" name="Liver Int.">
        <title>Mutations in the novel gene FOPV are associated with familial autosomal dominant and non-familial obliterative portal venopathy.</title>
        <authorList>
            <person name="Besmond C."/>
            <person name="Valla D."/>
            <person name="Hubert L."/>
            <person name="Poirier K."/>
            <person name="Grosse B."/>
            <person name="Guettier C."/>
            <person name="Bernard O."/>
            <person name="Gonzales E."/>
            <person name="Jacquemin E."/>
        </authorList>
    </citation>
    <scope>TISSUE SPECIFICITY</scope>
    <scope>VARIANTS ARG-595; SER-1415 AND ILE-1632</scope>
    <scope>POSSIBLE INVOLVEMENT IN OBLITERATIVE PORTAL VENOPATHY</scope>
</reference>
<feature type="chain" id="PRO_0000444029" description="Uncharacterized protein C4orf54">
    <location>
        <begin position="1"/>
        <end position="1793"/>
    </location>
</feature>
<feature type="region of interest" description="Disordered" evidence="2">
    <location>
        <begin position="156"/>
        <end position="189"/>
    </location>
</feature>
<feature type="region of interest" description="Disordered" evidence="2">
    <location>
        <begin position="204"/>
        <end position="362"/>
    </location>
</feature>
<feature type="region of interest" description="Disordered" evidence="2">
    <location>
        <begin position="407"/>
        <end position="505"/>
    </location>
</feature>
<feature type="region of interest" description="Disordered" evidence="2">
    <location>
        <begin position="757"/>
        <end position="809"/>
    </location>
</feature>
<feature type="region of interest" description="Disordered" evidence="2">
    <location>
        <begin position="829"/>
        <end position="917"/>
    </location>
</feature>
<feature type="region of interest" description="Disordered" evidence="2">
    <location>
        <begin position="1090"/>
        <end position="1147"/>
    </location>
</feature>
<feature type="region of interest" description="Disordered" evidence="2">
    <location>
        <begin position="1161"/>
        <end position="1187"/>
    </location>
</feature>
<feature type="region of interest" description="Disordered" evidence="2">
    <location>
        <begin position="1229"/>
        <end position="1249"/>
    </location>
</feature>
<feature type="region of interest" description="Disordered" evidence="2">
    <location>
        <begin position="1408"/>
        <end position="1465"/>
    </location>
</feature>
<feature type="region of interest" description="Disordered" evidence="2">
    <location>
        <begin position="1482"/>
        <end position="1567"/>
    </location>
</feature>
<feature type="compositionally biased region" description="Polar residues" evidence="2">
    <location>
        <begin position="166"/>
        <end position="175"/>
    </location>
</feature>
<feature type="compositionally biased region" description="Basic and acidic residues" evidence="2">
    <location>
        <begin position="227"/>
        <end position="237"/>
    </location>
</feature>
<feature type="compositionally biased region" description="Polar residues" evidence="2">
    <location>
        <begin position="238"/>
        <end position="247"/>
    </location>
</feature>
<feature type="compositionally biased region" description="Low complexity" evidence="2">
    <location>
        <begin position="248"/>
        <end position="258"/>
    </location>
</feature>
<feature type="compositionally biased region" description="Basic and acidic residues" evidence="2">
    <location>
        <begin position="277"/>
        <end position="288"/>
    </location>
</feature>
<feature type="compositionally biased region" description="Low complexity" evidence="2">
    <location>
        <begin position="289"/>
        <end position="307"/>
    </location>
</feature>
<feature type="compositionally biased region" description="Gly residues" evidence="2">
    <location>
        <begin position="317"/>
        <end position="342"/>
    </location>
</feature>
<feature type="compositionally biased region" description="Low complexity" evidence="2">
    <location>
        <begin position="434"/>
        <end position="450"/>
    </location>
</feature>
<feature type="compositionally biased region" description="Polar residues" evidence="2">
    <location>
        <begin position="463"/>
        <end position="476"/>
    </location>
</feature>
<feature type="compositionally biased region" description="Low complexity" evidence="2">
    <location>
        <begin position="485"/>
        <end position="505"/>
    </location>
</feature>
<feature type="compositionally biased region" description="Basic and acidic residues" evidence="2">
    <location>
        <begin position="829"/>
        <end position="839"/>
    </location>
</feature>
<feature type="compositionally biased region" description="Basic and acidic residues" evidence="2">
    <location>
        <begin position="846"/>
        <end position="872"/>
    </location>
</feature>
<feature type="compositionally biased region" description="Low complexity" evidence="2">
    <location>
        <begin position="1113"/>
        <end position="1123"/>
    </location>
</feature>
<feature type="compositionally biased region" description="Basic and acidic residues" evidence="2">
    <location>
        <begin position="1161"/>
        <end position="1174"/>
    </location>
</feature>
<feature type="compositionally biased region" description="Basic and acidic residues" evidence="2">
    <location>
        <begin position="1231"/>
        <end position="1246"/>
    </location>
</feature>
<feature type="compositionally biased region" description="Low complexity" evidence="2">
    <location>
        <begin position="1513"/>
        <end position="1528"/>
    </location>
</feature>
<feature type="compositionally biased region" description="Pro residues" evidence="2">
    <location>
        <begin position="1546"/>
        <end position="1555"/>
    </location>
</feature>
<feature type="modified residue" description="Phosphothreonine" evidence="1">
    <location>
        <position position="733"/>
    </location>
</feature>
<feature type="modified residue" description="Phosphoserine" evidence="1">
    <location>
        <position position="1187"/>
    </location>
</feature>
<feature type="modified residue" description="Omega-N-methylarginine" evidence="1">
    <location>
        <position position="1774"/>
    </location>
</feature>
<feature type="sequence variant" id="VAR_080344" description="Found in patients with obliterative portal venopathy; uncertain significance; dbSNP:rs1034287647." evidence="3">
    <original>G</original>
    <variation>R</variation>
    <location>
        <position position="595"/>
    </location>
</feature>
<feature type="sequence variant" id="VAR_080345" description="Found in a patient with obliterative portal venopathy; uncertain significance; dbSNP:rs555103041." evidence="3">
    <original>F</original>
    <variation>S</variation>
    <location>
        <position position="1415"/>
    </location>
</feature>
<feature type="sequence variant" id="VAR_080346" description="Found in patients with obliterative portal venopathy; uncertain significance; dbSNP:rs1726766935." evidence="3">
    <original>T</original>
    <variation>I</variation>
    <location>
        <position position="1632"/>
    </location>
</feature>
<dbReference type="EMBL" id="AC083902">
    <property type="status" value="NOT_ANNOTATED_CDS"/>
    <property type="molecule type" value="Genomic_DNA"/>
</dbReference>
<dbReference type="CCDS" id="CCDS87246.1"/>
<dbReference type="RefSeq" id="NP_001341364.1">
    <property type="nucleotide sequence ID" value="NM_001354435.2"/>
</dbReference>
<dbReference type="RefSeq" id="XP_006714493.1">
    <property type="nucleotide sequence ID" value="XM_006714430.3"/>
</dbReference>
<dbReference type="IntAct" id="D6RIA3">
    <property type="interactions" value="1"/>
</dbReference>
<dbReference type="GlyGen" id="D6RIA3">
    <property type="glycosylation" value="3 sites"/>
</dbReference>
<dbReference type="iPTMnet" id="D6RIA3"/>
<dbReference type="PhosphoSitePlus" id="D6RIA3"/>
<dbReference type="BioMuta" id="ENSG00000248713"/>
<dbReference type="jPOST" id="D6RIA3"/>
<dbReference type="MassIVE" id="D6RIA3"/>
<dbReference type="PaxDb" id="9606-ENSP00000427555"/>
<dbReference type="PeptideAtlas" id="D6RIA3"/>
<dbReference type="Antibodypedia" id="81805">
    <property type="antibodies" value="2 antibodies from 2 providers"/>
</dbReference>
<dbReference type="Ensembl" id="ENST00000511828.2">
    <property type="protein sequence ID" value="ENSP00000427555.1"/>
    <property type="gene ID" value="ENSG00000248713.2"/>
</dbReference>
<dbReference type="GeneID" id="285556"/>
<dbReference type="MANE-Select" id="ENST00000511828.2">
    <property type="protein sequence ID" value="ENSP00000427555.1"/>
    <property type="RefSeq nucleotide sequence ID" value="NM_001354435.2"/>
    <property type="RefSeq protein sequence ID" value="NP_001341364.1"/>
</dbReference>
<dbReference type="UCSC" id="uc003hvd.4">
    <property type="organism name" value="human"/>
</dbReference>
<dbReference type="AGR" id="HGNC:27741"/>
<dbReference type="GeneCards" id="C4orf54"/>
<dbReference type="HGNC" id="HGNC:27741">
    <property type="gene designation" value="C4orf54"/>
</dbReference>
<dbReference type="HPA" id="ENSG00000248713">
    <property type="expression patterns" value="Tissue enriched (skeletal)"/>
</dbReference>
<dbReference type="MIM" id="617881">
    <property type="type" value="gene"/>
</dbReference>
<dbReference type="neXtProt" id="NX_D6RIA3"/>
<dbReference type="OpenTargets" id="ENSG00000248713"/>
<dbReference type="VEuPathDB" id="HostDB:ENSG00000248713"/>
<dbReference type="eggNOG" id="ENOG502QW5W">
    <property type="taxonomic scope" value="Eukaryota"/>
</dbReference>
<dbReference type="GeneTree" id="ENSGT00730000111645"/>
<dbReference type="HOGENOM" id="CLU_003127_0_0_1"/>
<dbReference type="InParanoid" id="D6RIA3"/>
<dbReference type="OMA" id="RRTQDFP"/>
<dbReference type="OrthoDB" id="8945866at2759"/>
<dbReference type="PAN-GO" id="D6RIA3">
    <property type="GO annotations" value="0 GO annotations based on evolutionary models"/>
</dbReference>
<dbReference type="PhylomeDB" id="D6RIA3"/>
<dbReference type="TreeFam" id="TF343894"/>
<dbReference type="PathwayCommons" id="D6RIA3"/>
<dbReference type="SignaLink" id="D6RIA3"/>
<dbReference type="BioGRID-ORCS" id="285556">
    <property type="hits" value="0 hits in 24 CRISPR screens"/>
</dbReference>
<dbReference type="GenomeRNAi" id="285556"/>
<dbReference type="Pharos" id="D6RIA3">
    <property type="development level" value="Tdark"/>
</dbReference>
<dbReference type="PRO" id="PR:D6RIA3"/>
<dbReference type="Proteomes" id="UP000005640">
    <property type="component" value="Chromosome 4"/>
</dbReference>
<dbReference type="RNAct" id="D6RIA3">
    <property type="molecule type" value="protein"/>
</dbReference>
<dbReference type="Bgee" id="ENSG00000248713">
    <property type="expression patterns" value="Expressed in biceps brachii and 83 other cell types or tissues"/>
</dbReference>
<dbReference type="InterPro" id="IPR052303">
    <property type="entry name" value="CEFIP"/>
</dbReference>
<dbReference type="InterPro" id="IPR027838">
    <property type="entry name" value="DUF4585"/>
</dbReference>
<dbReference type="PANTHER" id="PTHR33775">
    <property type="entry name" value="CARDIAC-ENRICHED FHL2-INTERACTING PROTEIN-RELATED"/>
    <property type="match status" value="1"/>
</dbReference>
<dbReference type="PANTHER" id="PTHR33775:SF4">
    <property type="entry name" value="CHROMOSOME 4 OPEN READING FRAME 54"/>
    <property type="match status" value="1"/>
</dbReference>
<dbReference type="Pfam" id="PF15232">
    <property type="entry name" value="DUF4585"/>
    <property type="match status" value="1"/>
</dbReference>
<sequence length="1793" mass="190074">MLSFHFWKSRGQPTDAASSVADGIQTPRCCRRCQANNWTGQLSYRTLATVSAGAAAPQPQTTSTASSRSLPTSLRLAAAPPQGLKNWEVVAAVAAVPTALGPVQIRGTLLRATLQPLRGQRRTQDFPSDHHCLFLSLKPGQGLIMEAAPPELNSKARQAEVGDGVSSAQDSQELKQQLWPLPKPSASSQREAKYVDMCASAEVQRESPQTMKLTLGHCPGGQRASRSPKEKAQDEPSSKTPSPQNNPASSQLSRSQHSASEEGGNFSSSSSSSPMNKAEEDGLSKMEDSTTSTGALATSSSSLGFESESGESEGCQAVGGEGEKISGGGGGGKGGGGGGAGDGTECRDIIAKSQGSRDPPKVEEAHYITTHEIQLSEVEQDMDFDVGLASRWDFEDNNVIYSFVDYASFGGSDETPGDITSLTEEDDDNSCYLSTTPSTNTTRTPSPTSSDLARPNAGRSGRDTSSTEVGSGPSDSGPTPPPTGPGTAPLTEPLPETPEAASGAAAAAASSCGSAASQILLSIKPASRAINEPSNVRAKQNIIYAAKHEGDMSLRVSTAAEHNSSSLKQNPAAAVAQDHAKKFIAVPARLQTRCGAIRAKELVDYSSGASSAVSELDDADKEVRNLTSRAFRSLAYPYFEALNISSRESSTTLSEVGFGRWSTFLDLKCGGVGARVEQSLLRSSAASVAAGLRKGSGARATADQLYIQSKKSQTKALEFVVSKVEGEIKHVETPLCFQKQVQTGSRVVTLLEPLNVRSESKASSAPGPGRATKGPGKGPGSAYTDDGSETSEGSKPTSRADGPQKSKFASSLLKNVISKKMQREHEFKMERGEVMDTSHHLSGTSKETEGARGSERQRERGLQRQSSRHSEAGSEYTVVSMSDAGGEGSVAGSKSPVFKASTPRERNAGPGRNFTDGHTEVCEIKKSASETVKGIFLRSQNSAFRSWKEKEAEKREEQAPIGKLKLPKGGDWRADLGEISASKNTIMSRLFVPNIQQTPKDKQPRKQATKYPAAQATSTAVIRPKAPEIKIRLGSVQQPSSDFNIAKLLTPKLAGGSASNLFKTIEDNSRAQQKLFRGDNLEKVPHFQVRDIRDKSKAQGPLHQVRDVRKLIKGSGDSSDKGSVTPEQGLTGPKPRQLSAAAGGSGSLSPMVITCQAVVNQREDSMDREPRESMGKGGGSRVLNSSSPEGTVLVHRASGRLPVATIAPNKPEQGSYLPVLKIVSKASTQKTPEKLKEEEVKEEGKATKPARNALEKLTAAVRSMEELYSFNRNEWKRKSDPLPMMMDSHVLSLIASEEREGVVVADGDHDKLSKRLGEVEERGTGNKAGVVLRGAPIERLQRRNSNPSAESVSARAAAFENLARERPRSLYIPPVHKDVERTQPLQPLPPLPSNRNVFTVSASSIQKTGGVAGKFPQGPSPESPSAAKGIKSQGLRSLKISPATRAPPDEVTNRKSGSNLEKSNSDCENYLTIPLKGSSAAGELLSRPGASREGPPNSSAATLCSLPPLSARSQVPSSSKGSQVSGTSRPAWRTKPDNPRETVAAPPGPQSPEHPPTTIYHQPPLPFTLQGAQPQVLCFSPPSMPAPAPAASAPVPTDPFQQAQPQQTQRKMLLDVTTGQYYLVDTPVQPMTRRLFDPETGQYVDVPMTSQQQAVAPMSISVPPLALSPGAYGPTYMIYPGFLPTVLPTNALQPTPIARAPRGSELSPMVAEPSSKEAAATFTEAPYFMASGQSPASSTSSAPAATSQLLGAKAFAQLHGKPVISITSQPLGPRIIAPPSFDGTTMSFVVEHR</sequence>
<name>CD054_HUMAN</name>
<organism>
    <name type="scientific">Homo sapiens</name>
    <name type="common">Human</name>
    <dbReference type="NCBI Taxonomy" id="9606"/>
    <lineage>
        <taxon>Eukaryota</taxon>
        <taxon>Metazoa</taxon>
        <taxon>Chordata</taxon>
        <taxon>Craniata</taxon>
        <taxon>Vertebrata</taxon>
        <taxon>Euteleostomi</taxon>
        <taxon>Mammalia</taxon>
        <taxon>Eutheria</taxon>
        <taxon>Euarchontoglires</taxon>
        <taxon>Primates</taxon>
        <taxon>Haplorrhini</taxon>
        <taxon>Catarrhini</taxon>
        <taxon>Hominidae</taxon>
        <taxon>Homo</taxon>
    </lineage>
</organism>